<gene>
    <name type="primary">Ncr1</name>
    <name type="synonym">Ly94</name>
</gene>
<feature type="signal peptide" evidence="3">
    <location>
        <begin position="1"/>
        <end position="16"/>
    </location>
</feature>
<feature type="chain" id="PRO_0000015029" description="Natural cytotoxicity triggering receptor 1">
    <location>
        <begin position="17"/>
        <end position="325"/>
    </location>
</feature>
<feature type="topological domain" description="Extracellular" evidence="3">
    <location>
        <begin position="17"/>
        <end position="255"/>
    </location>
</feature>
<feature type="transmembrane region" description="Helical" evidence="3">
    <location>
        <begin position="256"/>
        <end position="273"/>
    </location>
</feature>
<feature type="topological domain" description="Cytoplasmic" evidence="3">
    <location>
        <begin position="274"/>
        <end position="325"/>
    </location>
</feature>
<feature type="domain" description="Ig-like 1">
    <location>
        <begin position="34"/>
        <end position="118"/>
    </location>
</feature>
<feature type="domain" description="Ig-like 2">
    <location>
        <begin position="129"/>
        <end position="211"/>
    </location>
</feature>
<feature type="glycosylation site" description="N-linked (GlcNAc...) asparagine" evidence="3">
    <location>
        <position position="139"/>
    </location>
</feature>
<feature type="glycosylation site" description="N-linked (GlcNAc...) asparagine" evidence="3">
    <location>
        <position position="216"/>
    </location>
</feature>
<feature type="glycosylation site" description="N-linked (GlcNAc...) asparagine" evidence="3">
    <location>
        <position position="238"/>
    </location>
</feature>
<feature type="disulfide bond" evidence="2">
    <location>
        <begin position="49"/>
        <end position="98"/>
    </location>
</feature>
<feature type="disulfide bond" evidence="2">
    <location>
        <begin position="144"/>
        <end position="190"/>
    </location>
</feature>
<feature type="sequence conflict" description="In Ref. 2; BAC37635." evidence="5" ref="2">
    <original>R</original>
    <variation>Q</variation>
    <location>
        <position position="131"/>
    </location>
</feature>
<protein>
    <recommendedName>
        <fullName>Natural cytotoxicity triggering receptor 1</fullName>
    </recommendedName>
    <alternativeName>
        <fullName>Activating receptor 1</fullName>
        <shortName>mAR-1</shortName>
    </alternativeName>
    <alternativeName>
        <fullName>Lymphocyte antigen 94</fullName>
    </alternativeName>
    <alternativeName>
        <fullName>Natural killer cell p46-related protein</fullName>
        <shortName>NK-p46</shortName>
        <shortName>NKp46</shortName>
        <shortName>mNKp46</shortName>
    </alternativeName>
    <cdAntigenName>CD335</cdAntigenName>
</protein>
<evidence type="ECO:0000250" key="1"/>
<evidence type="ECO:0000250" key="2">
    <source>
        <dbReference type="UniProtKB" id="O76036"/>
    </source>
</evidence>
<evidence type="ECO:0000255" key="3"/>
<evidence type="ECO:0000269" key="4">
    <source>
    </source>
</evidence>
<evidence type="ECO:0000305" key="5"/>
<accession>Q8C567</accession>
<accession>Q1RLN4</accession>
<accession>Q80UY6</accession>
<accession>Q9Z0Q4</accession>
<keyword id="KW-1003">Cell membrane</keyword>
<keyword id="KW-1015">Disulfide bond</keyword>
<keyword id="KW-0325">Glycoprotein</keyword>
<keyword id="KW-0393">Immunoglobulin domain</keyword>
<keyword id="KW-0472">Membrane</keyword>
<keyword id="KW-0675">Receptor</keyword>
<keyword id="KW-1185">Reference proteome</keyword>
<keyword id="KW-0677">Repeat</keyword>
<keyword id="KW-0732">Signal</keyword>
<keyword id="KW-0812">Transmembrane</keyword>
<keyword id="KW-1133">Transmembrane helix</keyword>
<organism>
    <name type="scientific">Mus musculus</name>
    <name type="common">Mouse</name>
    <dbReference type="NCBI Taxonomy" id="10090"/>
    <lineage>
        <taxon>Eukaryota</taxon>
        <taxon>Metazoa</taxon>
        <taxon>Chordata</taxon>
        <taxon>Craniata</taxon>
        <taxon>Vertebrata</taxon>
        <taxon>Euteleostomi</taxon>
        <taxon>Mammalia</taxon>
        <taxon>Eutheria</taxon>
        <taxon>Euarchontoglires</taxon>
        <taxon>Glires</taxon>
        <taxon>Rodentia</taxon>
        <taxon>Myomorpha</taxon>
        <taxon>Muroidea</taxon>
        <taxon>Muridae</taxon>
        <taxon>Murinae</taxon>
        <taxon>Mus</taxon>
        <taxon>Mus</taxon>
    </lineage>
</organism>
<proteinExistence type="evidence at protein level"/>
<dbReference type="EMBL" id="AJ223765">
    <property type="protein sequence ID" value="CAB39169.1"/>
    <property type="molecule type" value="mRNA"/>
</dbReference>
<dbReference type="EMBL" id="AK079401">
    <property type="protein sequence ID" value="BAC37635.1"/>
    <property type="molecule type" value="mRNA"/>
</dbReference>
<dbReference type="EMBL" id="BC042788">
    <property type="protein sequence ID" value="AAH42788.1"/>
    <property type="molecule type" value="mRNA"/>
</dbReference>
<dbReference type="EMBL" id="BC115364">
    <property type="protein sequence ID" value="AAI15365.1"/>
    <property type="molecule type" value="mRNA"/>
</dbReference>
<dbReference type="CCDS" id="CCDS20734.1"/>
<dbReference type="RefSeq" id="NP_034876.2">
    <property type="nucleotide sequence ID" value="NM_010746.3"/>
</dbReference>
<dbReference type="SMR" id="Q8C567"/>
<dbReference type="FunCoup" id="Q8C567">
    <property type="interactions" value="233"/>
</dbReference>
<dbReference type="IntAct" id="Q8C567">
    <property type="interactions" value="3"/>
</dbReference>
<dbReference type="STRING" id="10090.ENSMUSP00000006792"/>
<dbReference type="GlyCosmos" id="Q8C567">
    <property type="glycosylation" value="3 sites, No reported glycans"/>
</dbReference>
<dbReference type="GlyGen" id="Q8C567">
    <property type="glycosylation" value="3 sites"/>
</dbReference>
<dbReference type="PhosphoSitePlus" id="Q8C567"/>
<dbReference type="PaxDb" id="10090-ENSMUSP00000006792"/>
<dbReference type="ProteomicsDB" id="287460"/>
<dbReference type="DNASU" id="17086"/>
<dbReference type="GeneID" id="17086"/>
<dbReference type="KEGG" id="mmu:17086"/>
<dbReference type="UCSC" id="uc009exi.1">
    <property type="organism name" value="mouse"/>
</dbReference>
<dbReference type="AGR" id="MGI:1336212"/>
<dbReference type="CTD" id="9437"/>
<dbReference type="MGI" id="MGI:1336212">
    <property type="gene designation" value="Ncr1"/>
</dbReference>
<dbReference type="eggNOG" id="ENOG502RWVC">
    <property type="taxonomic scope" value="Eukaryota"/>
</dbReference>
<dbReference type="InParanoid" id="Q8C567"/>
<dbReference type="OrthoDB" id="9837647at2759"/>
<dbReference type="PhylomeDB" id="Q8C567"/>
<dbReference type="TreeFam" id="TF336644"/>
<dbReference type="BioGRID-ORCS" id="17086">
    <property type="hits" value="1 hit in 77 CRISPR screens"/>
</dbReference>
<dbReference type="PRO" id="PR:Q8C567"/>
<dbReference type="Proteomes" id="UP000000589">
    <property type="component" value="Unplaced"/>
</dbReference>
<dbReference type="RNAct" id="Q8C567">
    <property type="molecule type" value="protein"/>
</dbReference>
<dbReference type="GO" id="GO:0009986">
    <property type="term" value="C:cell surface"/>
    <property type="evidence" value="ECO:0000314"/>
    <property type="project" value="MGI"/>
</dbReference>
<dbReference type="GO" id="GO:0005886">
    <property type="term" value="C:plasma membrane"/>
    <property type="evidence" value="ECO:0007669"/>
    <property type="project" value="UniProtKB-SubCell"/>
</dbReference>
<dbReference type="GO" id="GO:0051607">
    <property type="term" value="P:defense response to virus"/>
    <property type="evidence" value="ECO:0000315"/>
    <property type="project" value="MGI"/>
</dbReference>
<dbReference type="GO" id="GO:0009597">
    <property type="term" value="P:detection of virus"/>
    <property type="evidence" value="ECO:0000315"/>
    <property type="project" value="MGI"/>
</dbReference>
<dbReference type="FunFam" id="2.60.40.10:FF:000049">
    <property type="entry name" value="Leukocyte immunoglobulin-like receptor subfamily B member 1"/>
    <property type="match status" value="2"/>
</dbReference>
<dbReference type="Gene3D" id="2.60.40.10">
    <property type="entry name" value="Immunoglobulins"/>
    <property type="match status" value="2"/>
</dbReference>
<dbReference type="InterPro" id="IPR036179">
    <property type="entry name" value="Ig-like_dom_sf"/>
</dbReference>
<dbReference type="InterPro" id="IPR013783">
    <property type="entry name" value="Ig-like_fold"/>
</dbReference>
<dbReference type="InterPro" id="IPR050412">
    <property type="entry name" value="Ig-like_Receptors_ImmuneReg"/>
</dbReference>
<dbReference type="InterPro" id="IPR003599">
    <property type="entry name" value="Ig_sub"/>
</dbReference>
<dbReference type="InterPro" id="IPR013151">
    <property type="entry name" value="Immunoglobulin_dom"/>
</dbReference>
<dbReference type="PANTHER" id="PTHR11738">
    <property type="entry name" value="MHC CLASS I NK CELL RECEPTOR"/>
    <property type="match status" value="1"/>
</dbReference>
<dbReference type="PANTHER" id="PTHR11738:SF14">
    <property type="entry name" value="NATURAL CYTOTOXICITY TRIGGERING RECEPTOR 1"/>
    <property type="match status" value="1"/>
</dbReference>
<dbReference type="Pfam" id="PF00047">
    <property type="entry name" value="ig"/>
    <property type="match status" value="1"/>
</dbReference>
<dbReference type="Pfam" id="PF13895">
    <property type="entry name" value="Ig_2"/>
    <property type="match status" value="1"/>
</dbReference>
<dbReference type="SMART" id="SM00409">
    <property type="entry name" value="IG"/>
    <property type="match status" value="2"/>
</dbReference>
<dbReference type="SUPFAM" id="SSF48726">
    <property type="entry name" value="Immunoglobulin"/>
    <property type="match status" value="2"/>
</dbReference>
<sequence length="325" mass="37266">MLPTLTALLCLGLCLSQRINTEKETLPKPIIWAKPSIMVTNGNSVNIWCQGAQSASEYQLYFEGSFFALERPKPSRSMNKVRFFISQMTSHTAGIYTCFYQSGELWSKSSNPLKLVVTGLYDTPNLWVYPRPEVTLGENVTFFCQLKTATSKFFLLKERGSNHIQNKYGNIQAEFPMGPVTRAHRGTYRCFGSYNDYAWSFPSEPVTLLITGGVENSSLAPTDPTSSLDYWEFDLSTNESGLQKDSAFWDHTTQNLIRIGLACIILITLVWLLTEDWLSKRKDHEEANRLTNWECRRRWRMQHYFEEEQRNAISMMELKATPGAL</sequence>
<reference key="1">
    <citation type="journal article" date="1999" name="Eur. J. Immunol.">
        <title>The murine homologue of the human NKp46, a triggering receptor involved in the induction of natural cytotoxicity.</title>
        <authorList>
            <person name="Biassoni R."/>
            <person name="Pessino A."/>
            <person name="Bottino C."/>
            <person name="Pende D."/>
            <person name="Moretta L."/>
            <person name="Moretta A."/>
        </authorList>
    </citation>
    <scope>NUCLEOTIDE SEQUENCE [MRNA]</scope>
    <scope>TISSUE SPECIFICITY</scope>
    <source>
        <tissue>Lymphoid tissue</tissue>
    </source>
</reference>
<reference key="2">
    <citation type="journal article" date="2005" name="Science">
        <title>The transcriptional landscape of the mammalian genome.</title>
        <authorList>
            <person name="Carninci P."/>
            <person name="Kasukawa T."/>
            <person name="Katayama S."/>
            <person name="Gough J."/>
            <person name="Frith M.C."/>
            <person name="Maeda N."/>
            <person name="Oyama R."/>
            <person name="Ravasi T."/>
            <person name="Lenhard B."/>
            <person name="Wells C."/>
            <person name="Kodzius R."/>
            <person name="Shimokawa K."/>
            <person name="Bajic V.B."/>
            <person name="Brenner S.E."/>
            <person name="Batalov S."/>
            <person name="Forrest A.R."/>
            <person name="Zavolan M."/>
            <person name="Davis M.J."/>
            <person name="Wilming L.G."/>
            <person name="Aidinis V."/>
            <person name="Allen J.E."/>
            <person name="Ambesi-Impiombato A."/>
            <person name="Apweiler R."/>
            <person name="Aturaliya R.N."/>
            <person name="Bailey T.L."/>
            <person name="Bansal M."/>
            <person name="Baxter L."/>
            <person name="Beisel K.W."/>
            <person name="Bersano T."/>
            <person name="Bono H."/>
            <person name="Chalk A.M."/>
            <person name="Chiu K.P."/>
            <person name="Choudhary V."/>
            <person name="Christoffels A."/>
            <person name="Clutterbuck D.R."/>
            <person name="Crowe M.L."/>
            <person name="Dalla E."/>
            <person name="Dalrymple B.P."/>
            <person name="de Bono B."/>
            <person name="Della Gatta G."/>
            <person name="di Bernardo D."/>
            <person name="Down T."/>
            <person name="Engstrom P."/>
            <person name="Fagiolini M."/>
            <person name="Faulkner G."/>
            <person name="Fletcher C.F."/>
            <person name="Fukushima T."/>
            <person name="Furuno M."/>
            <person name="Futaki S."/>
            <person name="Gariboldi M."/>
            <person name="Georgii-Hemming P."/>
            <person name="Gingeras T.R."/>
            <person name="Gojobori T."/>
            <person name="Green R.E."/>
            <person name="Gustincich S."/>
            <person name="Harbers M."/>
            <person name="Hayashi Y."/>
            <person name="Hensch T.K."/>
            <person name="Hirokawa N."/>
            <person name="Hill D."/>
            <person name="Huminiecki L."/>
            <person name="Iacono M."/>
            <person name="Ikeo K."/>
            <person name="Iwama A."/>
            <person name="Ishikawa T."/>
            <person name="Jakt M."/>
            <person name="Kanapin A."/>
            <person name="Katoh M."/>
            <person name="Kawasawa Y."/>
            <person name="Kelso J."/>
            <person name="Kitamura H."/>
            <person name="Kitano H."/>
            <person name="Kollias G."/>
            <person name="Krishnan S.P."/>
            <person name="Kruger A."/>
            <person name="Kummerfeld S.K."/>
            <person name="Kurochkin I.V."/>
            <person name="Lareau L.F."/>
            <person name="Lazarevic D."/>
            <person name="Lipovich L."/>
            <person name="Liu J."/>
            <person name="Liuni S."/>
            <person name="McWilliam S."/>
            <person name="Madan Babu M."/>
            <person name="Madera M."/>
            <person name="Marchionni L."/>
            <person name="Matsuda H."/>
            <person name="Matsuzawa S."/>
            <person name="Miki H."/>
            <person name="Mignone F."/>
            <person name="Miyake S."/>
            <person name="Morris K."/>
            <person name="Mottagui-Tabar S."/>
            <person name="Mulder N."/>
            <person name="Nakano N."/>
            <person name="Nakauchi H."/>
            <person name="Ng P."/>
            <person name="Nilsson R."/>
            <person name="Nishiguchi S."/>
            <person name="Nishikawa S."/>
            <person name="Nori F."/>
            <person name="Ohara O."/>
            <person name="Okazaki Y."/>
            <person name="Orlando V."/>
            <person name="Pang K.C."/>
            <person name="Pavan W.J."/>
            <person name="Pavesi G."/>
            <person name="Pesole G."/>
            <person name="Petrovsky N."/>
            <person name="Piazza S."/>
            <person name="Reed J."/>
            <person name="Reid J.F."/>
            <person name="Ring B.Z."/>
            <person name="Ringwald M."/>
            <person name="Rost B."/>
            <person name="Ruan Y."/>
            <person name="Salzberg S.L."/>
            <person name="Sandelin A."/>
            <person name="Schneider C."/>
            <person name="Schoenbach C."/>
            <person name="Sekiguchi K."/>
            <person name="Semple C.A."/>
            <person name="Seno S."/>
            <person name="Sessa L."/>
            <person name="Sheng Y."/>
            <person name="Shibata Y."/>
            <person name="Shimada H."/>
            <person name="Shimada K."/>
            <person name="Silva D."/>
            <person name="Sinclair B."/>
            <person name="Sperling S."/>
            <person name="Stupka E."/>
            <person name="Sugiura K."/>
            <person name="Sultana R."/>
            <person name="Takenaka Y."/>
            <person name="Taki K."/>
            <person name="Tammoja K."/>
            <person name="Tan S.L."/>
            <person name="Tang S."/>
            <person name="Taylor M.S."/>
            <person name="Tegner J."/>
            <person name="Teichmann S.A."/>
            <person name="Ueda H.R."/>
            <person name="van Nimwegen E."/>
            <person name="Verardo R."/>
            <person name="Wei C.L."/>
            <person name="Yagi K."/>
            <person name="Yamanishi H."/>
            <person name="Zabarovsky E."/>
            <person name="Zhu S."/>
            <person name="Zimmer A."/>
            <person name="Hide W."/>
            <person name="Bult C."/>
            <person name="Grimmond S.M."/>
            <person name="Teasdale R.D."/>
            <person name="Liu E.T."/>
            <person name="Brusic V."/>
            <person name="Quackenbush J."/>
            <person name="Wahlestedt C."/>
            <person name="Mattick J.S."/>
            <person name="Hume D.A."/>
            <person name="Kai C."/>
            <person name="Sasaki D."/>
            <person name="Tomaru Y."/>
            <person name="Fukuda S."/>
            <person name="Kanamori-Katayama M."/>
            <person name="Suzuki M."/>
            <person name="Aoki J."/>
            <person name="Arakawa T."/>
            <person name="Iida J."/>
            <person name="Imamura K."/>
            <person name="Itoh M."/>
            <person name="Kato T."/>
            <person name="Kawaji H."/>
            <person name="Kawagashira N."/>
            <person name="Kawashima T."/>
            <person name="Kojima M."/>
            <person name="Kondo S."/>
            <person name="Konno H."/>
            <person name="Nakano K."/>
            <person name="Ninomiya N."/>
            <person name="Nishio T."/>
            <person name="Okada M."/>
            <person name="Plessy C."/>
            <person name="Shibata K."/>
            <person name="Shiraki T."/>
            <person name="Suzuki S."/>
            <person name="Tagami M."/>
            <person name="Waki K."/>
            <person name="Watahiki A."/>
            <person name="Okamura-Oho Y."/>
            <person name="Suzuki H."/>
            <person name="Kawai J."/>
            <person name="Hayashizaki Y."/>
        </authorList>
    </citation>
    <scope>NUCLEOTIDE SEQUENCE [LARGE SCALE MRNA]</scope>
    <source>
        <strain>C57BL/6J</strain>
        <tissue>Bone</tissue>
    </source>
</reference>
<reference key="3">
    <citation type="journal article" date="2004" name="Genome Res.">
        <title>The status, quality, and expansion of the NIH full-length cDNA project: the Mammalian Gene Collection (MGC).</title>
        <authorList>
            <consortium name="The MGC Project Team"/>
        </authorList>
    </citation>
    <scope>NUCLEOTIDE SEQUENCE [LARGE SCALE MRNA]</scope>
    <source>
        <strain>FVB/N</strain>
        <tissue>Mammary tumor</tissue>
    </source>
</reference>
<comment type="function">
    <text evidence="1">Cytotoxicity-activating receptor that may contribute to the increased efficiency of activated natural killer (NK) cells to mediate tumor cell lysis.</text>
</comment>
<comment type="subunit">
    <text evidence="1">Interacts with CD3Z and FCER1G.</text>
</comment>
<comment type="interaction">
    <interactant intactId="EBI-11707971">
        <id>Q8C567</id>
    </interactant>
    <interactant intactId="EBI-9038570">
        <id>P27918</id>
        <label>CFP</label>
    </interactant>
    <organismsDiffer>true</organismsDiffer>
    <experiments>2</experiments>
</comment>
<comment type="interaction">
    <interactant intactId="EBI-11707971">
        <id>Q8C567</id>
    </interactant>
    <interactant intactId="EBI-15183949">
        <id>PRO_0000035863</id>
        <label>CFP</label>
        <dbReference type="UniProtKB" id="P27918"/>
    </interactant>
    <organismsDiffer>true</organismsDiffer>
    <experiments>3</experiments>
</comment>
<comment type="subcellular location">
    <subcellularLocation>
        <location evidence="5">Cell membrane</location>
        <topology evidence="5">Single-pass type I membrane protein</topology>
    </subcellularLocation>
</comment>
<comment type="tissue specificity">
    <text evidence="4">Selectively expressed by NK cells.</text>
</comment>
<comment type="similarity">
    <text evidence="5">Belongs to the natural cytotoxicity receptor (NCR) family.</text>
</comment>
<name>NCTR1_MOUSE</name>